<evidence type="ECO:0000255" key="1">
    <source>
        <dbReference type="PROSITE-ProRule" id="PRU00434"/>
    </source>
</evidence>
<evidence type="ECO:0000255" key="2">
    <source>
        <dbReference type="PROSITE-ProRule" id="PRU00441"/>
    </source>
</evidence>
<evidence type="ECO:0000256" key="3">
    <source>
        <dbReference type="SAM" id="MobiDB-lite"/>
    </source>
</evidence>
<evidence type="ECO:0000305" key="4"/>
<comment type="subcellular location">
    <subcellularLocation>
        <location evidence="2">Membrane</location>
        <topology evidence="2">Multi-pass membrane protein</topology>
    </subcellularLocation>
</comment>
<comment type="similarity">
    <text evidence="4">Belongs to the ABC transporter superfamily. ABCC family. Conjugate transporter (TC 3.A.1.208) subfamily.</text>
</comment>
<proteinExistence type="inferred from homology"/>
<keyword id="KW-0067">ATP-binding</keyword>
<keyword id="KW-0472">Membrane</keyword>
<keyword id="KW-0547">Nucleotide-binding</keyword>
<keyword id="KW-1185">Reference proteome</keyword>
<keyword id="KW-0677">Repeat</keyword>
<keyword id="KW-0812">Transmembrane</keyword>
<keyword id="KW-1133">Transmembrane helix</keyword>
<keyword id="KW-0813">Transport</keyword>
<name>ABCCC_DICDI</name>
<organism>
    <name type="scientific">Dictyostelium discoideum</name>
    <name type="common">Social amoeba</name>
    <dbReference type="NCBI Taxonomy" id="44689"/>
    <lineage>
        <taxon>Eukaryota</taxon>
        <taxon>Amoebozoa</taxon>
        <taxon>Evosea</taxon>
        <taxon>Eumycetozoa</taxon>
        <taxon>Dictyostelia</taxon>
        <taxon>Dictyosteliales</taxon>
        <taxon>Dictyosteliaceae</taxon>
        <taxon>Dictyostelium</taxon>
    </lineage>
</organism>
<feature type="chain" id="PRO_0000363856" description="ABC transporter C family member 12">
    <location>
        <begin position="1"/>
        <end position="1323"/>
    </location>
</feature>
<feature type="transmembrane region" description="Helical" evidence="2">
    <location>
        <begin position="111"/>
        <end position="131"/>
    </location>
</feature>
<feature type="transmembrane region" description="Helical" evidence="2">
    <location>
        <begin position="152"/>
        <end position="172"/>
    </location>
</feature>
<feature type="transmembrane region" description="Helical" evidence="2">
    <location>
        <begin position="227"/>
        <end position="247"/>
    </location>
</feature>
<feature type="transmembrane region" description="Helical" evidence="2">
    <location>
        <begin position="252"/>
        <end position="272"/>
    </location>
</feature>
<feature type="transmembrane region" description="Helical" evidence="2">
    <location>
        <begin position="338"/>
        <end position="358"/>
    </location>
</feature>
<feature type="transmembrane region" description="Helical" evidence="2">
    <location>
        <begin position="375"/>
        <end position="395"/>
    </location>
</feature>
<feature type="transmembrane region" description="Helical" evidence="2">
    <location>
        <begin position="712"/>
        <end position="732"/>
    </location>
</feature>
<feature type="transmembrane region" description="Helical" evidence="2">
    <location>
        <begin position="772"/>
        <end position="792"/>
    </location>
</feature>
<feature type="transmembrane region" description="Helical" evidence="2">
    <location>
        <begin position="840"/>
        <end position="860"/>
    </location>
</feature>
<feature type="transmembrane region" description="Helical" evidence="2">
    <location>
        <begin position="862"/>
        <end position="882"/>
    </location>
</feature>
<feature type="transmembrane region" description="Helical" evidence="2">
    <location>
        <begin position="952"/>
        <end position="972"/>
    </location>
</feature>
<feature type="domain" description="ABC transmembrane type-1 1" evidence="2">
    <location>
        <begin position="110"/>
        <end position="396"/>
    </location>
</feature>
<feature type="domain" description="ABC transporter 1" evidence="1">
    <location>
        <begin position="428"/>
        <end position="652"/>
    </location>
</feature>
<feature type="domain" description="ABC transmembrane type-1 2" evidence="2">
    <location>
        <begin position="720"/>
        <end position="1010"/>
    </location>
</feature>
<feature type="domain" description="ABC transporter 2" evidence="1">
    <location>
        <begin position="1047"/>
        <end position="1281"/>
    </location>
</feature>
<feature type="region of interest" description="Disordered" evidence="3">
    <location>
        <begin position="657"/>
        <end position="695"/>
    </location>
</feature>
<feature type="compositionally biased region" description="Basic and acidic residues" evidence="3">
    <location>
        <begin position="672"/>
        <end position="690"/>
    </location>
</feature>
<feature type="binding site" evidence="1">
    <location>
        <begin position="464"/>
        <end position="471"/>
    </location>
    <ligand>
        <name>ATP</name>
        <dbReference type="ChEBI" id="CHEBI:30616"/>
    </ligand>
</feature>
<feature type="binding site" evidence="1">
    <location>
        <begin position="1081"/>
        <end position="1088"/>
    </location>
    <ligand>
        <name>ATP</name>
        <dbReference type="ChEBI" id="CHEBI:30616"/>
    </ligand>
</feature>
<feature type="sequence conflict" description="In Ref. 2; AAL85715." evidence="4" ref="2">
    <original>DNLETKGGKE</original>
    <variation>EIWKLREER</variation>
    <location>
        <begin position="10"/>
        <end position="19"/>
    </location>
</feature>
<feature type="sequence conflict" description="In Ref. 2; AAL85715." evidence="4" ref="2">
    <original>R</original>
    <variation>C</variation>
    <location>
        <position position="829"/>
    </location>
</feature>
<dbReference type="EMBL" id="AAFI02000040">
    <property type="protein sequence ID" value="EAL66783.1"/>
    <property type="molecule type" value="Genomic_DNA"/>
</dbReference>
<dbReference type="EMBL" id="AF474344">
    <property type="protein sequence ID" value="AAL85715.1"/>
    <property type="molecule type" value="Genomic_DNA"/>
</dbReference>
<dbReference type="RefSeq" id="XP_640932.1">
    <property type="nucleotide sequence ID" value="XM_635840.1"/>
</dbReference>
<dbReference type="SMR" id="Q54U44"/>
<dbReference type="FunCoup" id="Q54U44">
    <property type="interactions" value="55"/>
</dbReference>
<dbReference type="STRING" id="44689.Q54U44"/>
<dbReference type="GlyGen" id="Q54U44">
    <property type="glycosylation" value="1 site"/>
</dbReference>
<dbReference type="PaxDb" id="44689-DDB0214809"/>
<dbReference type="EnsemblProtists" id="EAL66783">
    <property type="protein sequence ID" value="EAL66783"/>
    <property type="gene ID" value="DDB_G0280973"/>
</dbReference>
<dbReference type="GeneID" id="8622995"/>
<dbReference type="KEGG" id="ddi:DDB_G0280973"/>
<dbReference type="dictyBase" id="DDB_G0280973">
    <property type="gene designation" value="abcC12"/>
</dbReference>
<dbReference type="VEuPathDB" id="AmoebaDB:DDB_G0280973"/>
<dbReference type="eggNOG" id="KOG0054">
    <property type="taxonomic scope" value="Eukaryota"/>
</dbReference>
<dbReference type="HOGENOM" id="CLU_000604_27_3_1"/>
<dbReference type="InParanoid" id="Q54U44"/>
<dbReference type="OMA" id="MNNYSAR"/>
<dbReference type="PhylomeDB" id="Q54U44"/>
<dbReference type="Reactome" id="R-DDI-159418">
    <property type="pathway name" value="Recycling of bile acids and salts"/>
</dbReference>
<dbReference type="Reactome" id="R-DDI-189483">
    <property type="pathway name" value="Heme degradation"/>
</dbReference>
<dbReference type="Reactome" id="R-DDI-382556">
    <property type="pathway name" value="ABC-family proteins mediated transport"/>
</dbReference>
<dbReference type="Reactome" id="R-DDI-9749641">
    <property type="pathway name" value="Aspirin ADME"/>
</dbReference>
<dbReference type="Reactome" id="R-DDI-9753281">
    <property type="pathway name" value="Paracetamol ADME"/>
</dbReference>
<dbReference type="Reactome" id="R-DDI-9754706">
    <property type="pathway name" value="Atorvastatin ADME"/>
</dbReference>
<dbReference type="PRO" id="PR:Q54U44"/>
<dbReference type="Proteomes" id="UP000002195">
    <property type="component" value="Chromosome 3"/>
</dbReference>
<dbReference type="GO" id="GO:0016020">
    <property type="term" value="C:membrane"/>
    <property type="evidence" value="ECO:0000318"/>
    <property type="project" value="GO_Central"/>
</dbReference>
<dbReference type="GO" id="GO:0140359">
    <property type="term" value="F:ABC-type transporter activity"/>
    <property type="evidence" value="ECO:0007669"/>
    <property type="project" value="InterPro"/>
</dbReference>
<dbReference type="GO" id="GO:0005524">
    <property type="term" value="F:ATP binding"/>
    <property type="evidence" value="ECO:0007669"/>
    <property type="project" value="UniProtKB-KW"/>
</dbReference>
<dbReference type="GO" id="GO:0016887">
    <property type="term" value="F:ATP hydrolysis activity"/>
    <property type="evidence" value="ECO:0007669"/>
    <property type="project" value="InterPro"/>
</dbReference>
<dbReference type="GO" id="GO:0042626">
    <property type="term" value="F:ATPase-coupled transmembrane transporter activity"/>
    <property type="evidence" value="ECO:0000318"/>
    <property type="project" value="GO_Central"/>
</dbReference>
<dbReference type="GO" id="GO:0030587">
    <property type="term" value="P:sorocarp development"/>
    <property type="evidence" value="ECO:0007669"/>
    <property type="project" value="UniProtKB-ARBA"/>
</dbReference>
<dbReference type="GO" id="GO:0055085">
    <property type="term" value="P:transmembrane transport"/>
    <property type="evidence" value="ECO:0000318"/>
    <property type="project" value="GO_Central"/>
</dbReference>
<dbReference type="CDD" id="cd18579">
    <property type="entry name" value="ABC_6TM_ABCC_D1"/>
    <property type="match status" value="1"/>
</dbReference>
<dbReference type="CDD" id="cd18580">
    <property type="entry name" value="ABC_6TM_ABCC_D2"/>
    <property type="match status" value="1"/>
</dbReference>
<dbReference type="CDD" id="cd03250">
    <property type="entry name" value="ABCC_MRP_domain1"/>
    <property type="match status" value="1"/>
</dbReference>
<dbReference type="CDD" id="cd03244">
    <property type="entry name" value="ABCC_MRP_domain2"/>
    <property type="match status" value="1"/>
</dbReference>
<dbReference type="FunFam" id="1.20.1560.10:FF:000024">
    <property type="entry name" value="ABC transporter C family member 2"/>
    <property type="match status" value="1"/>
</dbReference>
<dbReference type="FunFam" id="3.40.50.300:FF:002981">
    <property type="entry name" value="ABC transporter C family member 5"/>
    <property type="match status" value="1"/>
</dbReference>
<dbReference type="FunFam" id="1.20.1560.10:FF:000010">
    <property type="entry name" value="Multidrug resistance-associated ABC transporter"/>
    <property type="match status" value="1"/>
</dbReference>
<dbReference type="FunFam" id="3.40.50.300:FF:000163">
    <property type="entry name" value="Multidrug resistance-associated protein member 4"/>
    <property type="match status" value="1"/>
</dbReference>
<dbReference type="Gene3D" id="1.20.1560.10">
    <property type="entry name" value="ABC transporter type 1, transmembrane domain"/>
    <property type="match status" value="2"/>
</dbReference>
<dbReference type="Gene3D" id="3.40.50.300">
    <property type="entry name" value="P-loop containing nucleotide triphosphate hydrolases"/>
    <property type="match status" value="2"/>
</dbReference>
<dbReference type="InterPro" id="IPR003593">
    <property type="entry name" value="AAA+_ATPase"/>
</dbReference>
<dbReference type="InterPro" id="IPR011527">
    <property type="entry name" value="ABC1_TM_dom"/>
</dbReference>
<dbReference type="InterPro" id="IPR036640">
    <property type="entry name" value="ABC1_TM_sf"/>
</dbReference>
<dbReference type="InterPro" id="IPR003439">
    <property type="entry name" value="ABC_transporter-like_ATP-bd"/>
</dbReference>
<dbReference type="InterPro" id="IPR017871">
    <property type="entry name" value="ABC_transporter-like_CS"/>
</dbReference>
<dbReference type="InterPro" id="IPR050173">
    <property type="entry name" value="ABC_transporter_C-like"/>
</dbReference>
<dbReference type="InterPro" id="IPR044746">
    <property type="entry name" value="ABCC_6TM_D1"/>
</dbReference>
<dbReference type="InterPro" id="IPR044726">
    <property type="entry name" value="ABCC_6TM_D2"/>
</dbReference>
<dbReference type="InterPro" id="IPR027417">
    <property type="entry name" value="P-loop_NTPase"/>
</dbReference>
<dbReference type="PANTHER" id="PTHR24223:SF329">
    <property type="entry name" value="ABC TRANSPORTER C FAMILY MEMBER 10-RELATED"/>
    <property type="match status" value="1"/>
</dbReference>
<dbReference type="PANTHER" id="PTHR24223">
    <property type="entry name" value="ATP-BINDING CASSETTE SUB-FAMILY C"/>
    <property type="match status" value="1"/>
</dbReference>
<dbReference type="Pfam" id="PF00664">
    <property type="entry name" value="ABC_membrane"/>
    <property type="match status" value="2"/>
</dbReference>
<dbReference type="Pfam" id="PF00005">
    <property type="entry name" value="ABC_tran"/>
    <property type="match status" value="2"/>
</dbReference>
<dbReference type="SMART" id="SM00382">
    <property type="entry name" value="AAA"/>
    <property type="match status" value="2"/>
</dbReference>
<dbReference type="SUPFAM" id="SSF90123">
    <property type="entry name" value="ABC transporter transmembrane region"/>
    <property type="match status" value="2"/>
</dbReference>
<dbReference type="SUPFAM" id="SSF52540">
    <property type="entry name" value="P-loop containing nucleoside triphosphate hydrolases"/>
    <property type="match status" value="2"/>
</dbReference>
<dbReference type="PROSITE" id="PS50929">
    <property type="entry name" value="ABC_TM1F"/>
    <property type="match status" value="2"/>
</dbReference>
<dbReference type="PROSITE" id="PS00211">
    <property type="entry name" value="ABC_TRANSPORTER_1"/>
    <property type="match status" value="2"/>
</dbReference>
<dbReference type="PROSITE" id="PS50893">
    <property type="entry name" value="ABC_TRANSPORTER_2"/>
    <property type="match status" value="2"/>
</dbReference>
<sequence length="1323" mass="148126">MEDIELNSVDNLETKGGKEIKKKEKKIGYGGKKSPEENSNFLSNLTFSWADGFVIHCFRNVLQLSHLWDLASYDKSEYLAKKIAKSWEIEIQKPKPSYLRAGFRAFGKLHCISLFFYSIYVGSQFVGPEILSRMVTFVVESKLGTSTEDPNMGYYYALIMFGTAMIGSFCNYQANRVTVRTGDRLRSIIVLDVYKKAIKLSNSARSNTSPGQIVNLISNDAQRMIEVFGILNNGLFALPQIIICLALLYEKIGWPTFVGLGLMLAAIPFNGLAAKKLTETRRILIGHTDGRVKVTSEILQAMKIIKLYAWEDSFAKKVLDRRNNEIKLLFSFTRYRTILIAMIGAIPTAASILVFSTYYGYNGSLDAGKIFSALSYLNLLKIPLGFLPILIALGIQMQIASKRVTDFLLLPEMKEVQQIDNPSLPNGVYMKNSTTTWNKEKEDSFGLKNINFEAKGQSLTMVVGSVGSGKSTLVQAMLGELETIDGEIGIKGSIAYVPQQAWIINATLKENIIFGKELDEERYQKVLEVCALKRDIELFPQGDSVEIGERGINLSGGQKQRVSIARAVYSDADVYILDDPLSAVDSHVGKHLFHKCFKGILSSKTVILVANQINYLPFADNTVVLKSGEIVERGTYYELINAKLEFASLLQEYGVDENTKGDDSDDDDDKKDDDKKEEKVEKPKQSDKDGTLISEEEAEQGAVAGKVYWKYVTAGGGLLFLFAMILFLLETGSKTFTDWWLSHWQTESSERMESILLGEEPTGLTDDQNLGIYIGVGMASIIVTVVRTFSFFEYAVRAAHSIHHELFNALLKKPMSFFDQTPLGRIINRFTRDLDIIDNLIATSIAQFFTLMLSVLATLILISIIVPWLLIPLAPICILFFILQYFYRYTSRGLQRIEAITRSPIFNHFSETLNGVVSIRAYKKQQENILKNQKRLDDNNNCYLTLQAMNRWLGLRLDFLGNLIVFFSCIFITLKKDTISPSDVGLVLSYALSITSNLNQGVLQAADTETKMNSVERISQYIRGAVEAPQIIDDCRPSPDWPINGSIKFDNLVMRYREGLDPVLKGITCEIKAKEKIGIVGRTGAGKSSIVLALFRLIEASEGSISIDGENIAKFGLKDLRRNLAIIPQDPVLFSGTLRENLDPFNECPDHELWSILDDIQLSKVFKSTEEGLNSKVTENGENFSVGQRQLIVLARALLRKPKILVLDEATASVDGQSDSLIQATIRNKFSNCTILTIAHRLNTIMDSDKIMVLDAGKISEFDEPWTLLQNQNGLLTWLVNETGPQNAIYLRKLAEAKKSGLNINEITQIDQQNDNLNTPPRL</sequence>
<reference key="1">
    <citation type="journal article" date="2005" name="Nature">
        <title>The genome of the social amoeba Dictyostelium discoideum.</title>
        <authorList>
            <person name="Eichinger L."/>
            <person name="Pachebat J.A."/>
            <person name="Gloeckner G."/>
            <person name="Rajandream M.A."/>
            <person name="Sucgang R."/>
            <person name="Berriman M."/>
            <person name="Song J."/>
            <person name="Olsen R."/>
            <person name="Szafranski K."/>
            <person name="Xu Q."/>
            <person name="Tunggal B."/>
            <person name="Kummerfeld S."/>
            <person name="Madera M."/>
            <person name="Konfortov B.A."/>
            <person name="Rivero F."/>
            <person name="Bankier A.T."/>
            <person name="Lehmann R."/>
            <person name="Hamlin N."/>
            <person name="Davies R."/>
            <person name="Gaudet P."/>
            <person name="Fey P."/>
            <person name="Pilcher K."/>
            <person name="Chen G."/>
            <person name="Saunders D."/>
            <person name="Sodergren E.J."/>
            <person name="Davis P."/>
            <person name="Kerhornou A."/>
            <person name="Nie X."/>
            <person name="Hall N."/>
            <person name="Anjard C."/>
            <person name="Hemphill L."/>
            <person name="Bason N."/>
            <person name="Farbrother P."/>
            <person name="Desany B."/>
            <person name="Just E."/>
            <person name="Morio T."/>
            <person name="Rost R."/>
            <person name="Churcher C.M."/>
            <person name="Cooper J."/>
            <person name="Haydock S."/>
            <person name="van Driessche N."/>
            <person name="Cronin A."/>
            <person name="Goodhead I."/>
            <person name="Muzny D.M."/>
            <person name="Mourier T."/>
            <person name="Pain A."/>
            <person name="Lu M."/>
            <person name="Harper D."/>
            <person name="Lindsay R."/>
            <person name="Hauser H."/>
            <person name="James K.D."/>
            <person name="Quiles M."/>
            <person name="Madan Babu M."/>
            <person name="Saito T."/>
            <person name="Buchrieser C."/>
            <person name="Wardroper A."/>
            <person name="Felder M."/>
            <person name="Thangavelu M."/>
            <person name="Johnson D."/>
            <person name="Knights A."/>
            <person name="Loulseged H."/>
            <person name="Mungall K.L."/>
            <person name="Oliver K."/>
            <person name="Price C."/>
            <person name="Quail M.A."/>
            <person name="Urushihara H."/>
            <person name="Hernandez J."/>
            <person name="Rabbinowitsch E."/>
            <person name="Steffen D."/>
            <person name="Sanders M."/>
            <person name="Ma J."/>
            <person name="Kohara Y."/>
            <person name="Sharp S."/>
            <person name="Simmonds M.N."/>
            <person name="Spiegler S."/>
            <person name="Tivey A."/>
            <person name="Sugano S."/>
            <person name="White B."/>
            <person name="Walker D."/>
            <person name="Woodward J.R."/>
            <person name="Winckler T."/>
            <person name="Tanaka Y."/>
            <person name="Shaulsky G."/>
            <person name="Schleicher M."/>
            <person name="Weinstock G.M."/>
            <person name="Rosenthal A."/>
            <person name="Cox E.C."/>
            <person name="Chisholm R.L."/>
            <person name="Gibbs R.A."/>
            <person name="Loomis W.F."/>
            <person name="Platzer M."/>
            <person name="Kay R.R."/>
            <person name="Williams J.G."/>
            <person name="Dear P.H."/>
            <person name="Noegel A.A."/>
            <person name="Barrell B.G."/>
            <person name="Kuspa A."/>
        </authorList>
    </citation>
    <scope>NUCLEOTIDE SEQUENCE [LARGE SCALE GENOMIC DNA]</scope>
    <source>
        <strain>AX4</strain>
    </source>
</reference>
<reference key="2">
    <citation type="journal article" date="2002" name="Eukaryot. Cell">
        <title>Evolutionary analyses of ABC transporters of Dictyostelium discoideum.</title>
        <authorList>
            <person name="Anjard C."/>
            <person name="Loomis W.F."/>
        </authorList>
    </citation>
    <scope>NUCLEOTIDE SEQUENCE [GENOMIC DNA] OF 1-1265</scope>
    <scope>NOMENCLATURE</scope>
    <source>
        <strain>AX4</strain>
    </source>
</reference>
<protein>
    <recommendedName>
        <fullName>ABC transporter C family member 12</fullName>
    </recommendedName>
    <alternativeName>
        <fullName>ABC transporter ABCC.12</fullName>
    </alternativeName>
</protein>
<accession>Q54U44</accession>
<accession>Q8T6G8</accession>
<gene>
    <name type="primary">abcC12</name>
    <name type="ORF">DDB_G0280973</name>
</gene>